<comment type="function">
    <text evidence="1">The key enzymatic reactions in nitrogen fixation are catalyzed by the nitrogenase complex, which has 2 components: the iron protein and the molybdenum-iron protein.</text>
</comment>
<comment type="catalytic activity">
    <reaction>
        <text>N2 + 8 reduced [2Fe-2S]-[ferredoxin] + 16 ATP + 16 H2O = H2 + 8 oxidized [2Fe-2S]-[ferredoxin] + 2 NH4(+) + 16 ADP + 16 phosphate + 6 H(+)</text>
        <dbReference type="Rhea" id="RHEA:21448"/>
        <dbReference type="Rhea" id="RHEA-COMP:10000"/>
        <dbReference type="Rhea" id="RHEA-COMP:10001"/>
        <dbReference type="ChEBI" id="CHEBI:15377"/>
        <dbReference type="ChEBI" id="CHEBI:15378"/>
        <dbReference type="ChEBI" id="CHEBI:17997"/>
        <dbReference type="ChEBI" id="CHEBI:18276"/>
        <dbReference type="ChEBI" id="CHEBI:28938"/>
        <dbReference type="ChEBI" id="CHEBI:30616"/>
        <dbReference type="ChEBI" id="CHEBI:33737"/>
        <dbReference type="ChEBI" id="CHEBI:33738"/>
        <dbReference type="ChEBI" id="CHEBI:43474"/>
        <dbReference type="ChEBI" id="CHEBI:456216"/>
        <dbReference type="EC" id="1.18.6.1"/>
    </reaction>
</comment>
<comment type="cofactor">
    <cofactor evidence="1">
        <name>[4Fe-4S] cluster</name>
        <dbReference type="ChEBI" id="CHEBI:49883"/>
    </cofactor>
    <text evidence="1">Binds 1 [4Fe-4S] cluster per dimer.</text>
</comment>
<comment type="subunit">
    <text evidence="1">Homodimer.</text>
</comment>
<comment type="PTM">
    <text evidence="1">The reversible ADP-ribosylation of Arg-97 inactivates the nitrogenase reductase and regulates nitrogenase activity.</text>
</comment>
<comment type="similarity">
    <text evidence="3">Belongs to the NifH/BchL/ChlL family.</text>
</comment>
<dbReference type="EC" id="1.18.6.1"/>
<dbReference type="EMBL" id="X03777">
    <property type="protein sequence ID" value="CAA27407.1"/>
    <property type="molecule type" value="Genomic_DNA"/>
</dbReference>
<dbReference type="PIR" id="S07313">
    <property type="entry name" value="NIMXVO"/>
</dbReference>
<dbReference type="SMR" id="P06119"/>
<dbReference type="GO" id="GO:0051539">
    <property type="term" value="F:4 iron, 4 sulfur cluster binding"/>
    <property type="evidence" value="ECO:0007669"/>
    <property type="project" value="UniProtKB-KW"/>
</dbReference>
<dbReference type="GO" id="GO:0005524">
    <property type="term" value="F:ATP binding"/>
    <property type="evidence" value="ECO:0007669"/>
    <property type="project" value="UniProtKB-UniRule"/>
</dbReference>
<dbReference type="GO" id="GO:0046872">
    <property type="term" value="F:metal ion binding"/>
    <property type="evidence" value="ECO:0007669"/>
    <property type="project" value="UniProtKB-KW"/>
</dbReference>
<dbReference type="GO" id="GO:0016163">
    <property type="term" value="F:nitrogenase activity"/>
    <property type="evidence" value="ECO:0007669"/>
    <property type="project" value="UniProtKB-UniRule"/>
</dbReference>
<dbReference type="GO" id="GO:0009399">
    <property type="term" value="P:nitrogen fixation"/>
    <property type="evidence" value="ECO:0007669"/>
    <property type="project" value="UniProtKB-UniRule"/>
</dbReference>
<dbReference type="CDD" id="cd02040">
    <property type="entry name" value="NifH"/>
    <property type="match status" value="1"/>
</dbReference>
<dbReference type="Gene3D" id="3.40.50.300">
    <property type="entry name" value="P-loop containing nucleotide triphosphate hydrolases"/>
    <property type="match status" value="1"/>
</dbReference>
<dbReference type="HAMAP" id="MF_00533">
    <property type="entry name" value="NifH"/>
    <property type="match status" value="1"/>
</dbReference>
<dbReference type="InterPro" id="IPR030655">
    <property type="entry name" value="NifH/chlL_CS"/>
</dbReference>
<dbReference type="InterPro" id="IPR000392">
    <property type="entry name" value="NifH/frxC"/>
</dbReference>
<dbReference type="InterPro" id="IPR005977">
    <property type="entry name" value="Nitrogenase_Fe_NifH"/>
</dbReference>
<dbReference type="InterPro" id="IPR027417">
    <property type="entry name" value="P-loop_NTPase"/>
</dbReference>
<dbReference type="NCBIfam" id="TIGR01287">
    <property type="entry name" value="nifH"/>
    <property type="match status" value="1"/>
</dbReference>
<dbReference type="NCBIfam" id="NF009701">
    <property type="entry name" value="PRK13230.1"/>
    <property type="match status" value="1"/>
</dbReference>
<dbReference type="PANTHER" id="PTHR42864">
    <property type="entry name" value="LIGHT-INDEPENDENT PROTOCHLOROPHYLLIDE REDUCTASE IRON-SULFUR ATP-BINDING PROTEIN"/>
    <property type="match status" value="1"/>
</dbReference>
<dbReference type="PANTHER" id="PTHR42864:SF2">
    <property type="entry name" value="LIGHT-INDEPENDENT PROTOCHLOROPHYLLIDE REDUCTASE IRON-SULFUR ATP-BINDING PROTEIN"/>
    <property type="match status" value="1"/>
</dbReference>
<dbReference type="Pfam" id="PF00142">
    <property type="entry name" value="Fer4_NifH"/>
    <property type="match status" value="1"/>
</dbReference>
<dbReference type="PIRSF" id="PIRSF000363">
    <property type="entry name" value="Nitrogenase_iron"/>
    <property type="match status" value="1"/>
</dbReference>
<dbReference type="PRINTS" id="PR00091">
    <property type="entry name" value="NITROGNASEII"/>
</dbReference>
<dbReference type="SUPFAM" id="SSF52540">
    <property type="entry name" value="P-loop containing nucleoside triphosphate hydrolases"/>
    <property type="match status" value="1"/>
</dbReference>
<dbReference type="PROSITE" id="PS00746">
    <property type="entry name" value="NIFH_FRXC_1"/>
    <property type="match status" value="1"/>
</dbReference>
<dbReference type="PROSITE" id="PS00692">
    <property type="entry name" value="NIFH_FRXC_2"/>
    <property type="match status" value="1"/>
</dbReference>
<dbReference type="PROSITE" id="PS51026">
    <property type="entry name" value="NIFH_FRXC_3"/>
    <property type="match status" value="1"/>
</dbReference>
<organism>
    <name type="scientific">Methanococcus voltae</name>
    <dbReference type="NCBI Taxonomy" id="2188"/>
    <lineage>
        <taxon>Archaea</taxon>
        <taxon>Methanobacteriati</taxon>
        <taxon>Methanobacteriota</taxon>
        <taxon>Methanomada group</taxon>
        <taxon>Methanococci</taxon>
        <taxon>Methanococcales</taxon>
        <taxon>Methanococcaceae</taxon>
        <taxon>Methanococcus</taxon>
    </lineage>
</organism>
<feature type="chain" id="PRO_0000139547" description="Nitrogenase iron protein">
    <location>
        <begin position="1"/>
        <end position="278"/>
    </location>
</feature>
<feature type="binding site" evidence="2">
    <location>
        <begin position="8"/>
        <end position="15"/>
    </location>
    <ligand>
        <name>ATP</name>
        <dbReference type="ChEBI" id="CHEBI:30616"/>
    </ligand>
</feature>
<feature type="binding site" evidence="1">
    <location>
        <position position="94"/>
    </location>
    <ligand>
        <name>[4Fe-4S] cluster</name>
        <dbReference type="ChEBI" id="CHEBI:49883"/>
        <note>ligand shared between dimeric partners</note>
    </ligand>
</feature>
<feature type="binding site" evidence="1">
    <location>
        <position position="130"/>
    </location>
    <ligand>
        <name>[4Fe-4S] cluster</name>
        <dbReference type="ChEBI" id="CHEBI:49883"/>
        <note>ligand shared between dimeric partners</note>
    </ligand>
</feature>
<feature type="modified residue" description="ADP-ribosylarginine; by dinitrogenase reductase ADP-ribosyltransferase" evidence="1">
    <location>
        <position position="97"/>
    </location>
</feature>
<evidence type="ECO:0000250" key="1"/>
<evidence type="ECO:0000255" key="2"/>
<evidence type="ECO:0000305" key="3"/>
<keyword id="KW-0004">4Fe-4S</keyword>
<keyword id="KW-0013">ADP-ribosylation</keyword>
<keyword id="KW-0067">ATP-binding</keyword>
<keyword id="KW-0408">Iron</keyword>
<keyword id="KW-0411">Iron-sulfur</keyword>
<keyword id="KW-0479">Metal-binding</keyword>
<keyword id="KW-0535">Nitrogen fixation</keyword>
<keyword id="KW-0547">Nucleotide-binding</keyword>
<keyword id="KW-0560">Oxidoreductase</keyword>
<accession>P06119</accession>
<proteinExistence type="inferred from homology"/>
<reference key="1">
    <citation type="journal article" date="1986" name="Mol. Gen. Genet.">
        <title>Primary structure and expression of a gene homologous to nifH (nitrogenase Fe protein) from the archaebacterium Methanococcus voltae.</title>
        <authorList>
            <person name="Souillard N."/>
            <person name="Sibold L."/>
        </authorList>
    </citation>
    <scope>NUCLEOTIDE SEQUENCE [GENOMIC DNA]</scope>
</reference>
<gene>
    <name type="primary">nifH</name>
</gene>
<protein>
    <recommendedName>
        <fullName>Nitrogenase iron protein</fullName>
        <ecNumber>1.18.6.1</ecNumber>
    </recommendedName>
    <alternativeName>
        <fullName>Nitrogenase Fe protein</fullName>
    </alternativeName>
    <alternativeName>
        <fullName>Nitrogenase component II</fullName>
    </alternativeName>
    <alternativeName>
        <fullName>Nitrogenase reductase</fullName>
    </alternativeName>
</protein>
<name>NIFH_METVO</name>
<sequence length="278" mass="30396">MRKFCIYGKGGIGKSTNVGNMAAALAEDGKKVLVVGCDPKADSTRTLMHGKINTVLDTFRDKGPEYMKIEDIVYEGFNGVYCVESGGPEPGVGCAGRGVITAVDMLDRLGVYDQLKPDVVIYDILGDVVCGGFAMPLQKKLAEDVYIVTTCDPMAIYAANNICKGIKRYGNRGKIALGGIIYNGRSVVDEPEIIDKFVEGINSQVMGKVPMSNIITKAELRKQTTIEYAPDSEIANKFRELANSIYENKKTTIPTPLSEQGLDELTESIEELVRRKYE</sequence>